<keyword id="KW-0007">Acetylation</keyword>
<keyword id="KW-0158">Chromosome</keyword>
<keyword id="KW-0227">DNA damage</keyword>
<keyword id="KW-0234">DNA repair</keyword>
<keyword id="KW-0238">DNA-binding</keyword>
<keyword id="KW-0488">Methylation</keyword>
<keyword id="KW-0544">Nucleosome core</keyword>
<keyword id="KW-0539">Nucleus</keyword>
<keyword id="KW-0597">Phosphoprotein</keyword>
<keyword id="KW-1185">Reference proteome</keyword>
<name>H2A1_CANGA</name>
<sequence length="131" mass="13873">MSGGKGGKAGSAAKASQTRSAKAGLTFPVGRVHRLLRRGNYAQRIGSGAPVYLTAVLEYLAAEILELAGNAARDNKKSRIIPRHLQLAIRNDDELNKLLGNVTIAQGGVLPNIHQNLLPKKSAKPSASQEL</sequence>
<feature type="initiator methionine" description="Removed" evidence="1">
    <location>
        <position position="1"/>
    </location>
</feature>
<feature type="chain" id="PRO_0000055212" description="Histone H2A.1">
    <location>
        <begin position="2"/>
        <end position="131"/>
    </location>
</feature>
<feature type="short sequence motif" description="[ST]-Q motif">
    <location>
        <begin position="128"/>
        <end position="129"/>
    </location>
</feature>
<feature type="site" description="Not ubiquitinated" evidence="2">
    <location>
        <position position="120"/>
    </location>
</feature>
<feature type="modified residue" description="N-acetylserine" evidence="1">
    <location>
        <position position="2"/>
    </location>
</feature>
<feature type="modified residue" description="N6-acetyllysine" evidence="1">
    <location>
        <position position="5"/>
    </location>
</feature>
<feature type="modified residue" description="N6-acetyllysine" evidence="1">
    <location>
        <position position="8"/>
    </location>
</feature>
<feature type="modified residue" description="N5-methylglutamine" evidence="1">
    <location>
        <position position="106"/>
    </location>
</feature>
<feature type="modified residue" description="Phosphoserine" evidence="1">
    <location>
        <position position="128"/>
    </location>
</feature>
<protein>
    <recommendedName>
        <fullName>Histone H2A.1</fullName>
    </recommendedName>
</protein>
<evidence type="ECO:0000250" key="1"/>
<evidence type="ECO:0000305" key="2"/>
<comment type="function">
    <text>Core component of nucleosome which plays a central role in DNA double strand break (DSB) repair. Nucleosomes wrap and compact DNA into chromatin, limiting DNA accessibility to the cellular machineries which require DNA as a template. Histones thereby play a central role in transcription regulation, DNA repair, DNA replication and chromosomal stability. DNA accessibility is regulated via a complex set of post-translational modifications of histones, also called histone code, and nucleosome remodeling.</text>
</comment>
<comment type="subunit">
    <text>The nucleosome is a histone octamer containing two molecules each of H2A, H2B, H3 and H4 assembled in one H3-H4 heterotetramer and two H2A-H2B heterodimers. The octamer wraps approximately 147 bp of DNA.</text>
</comment>
<comment type="subcellular location">
    <subcellularLocation>
        <location>Nucleus</location>
    </subcellularLocation>
    <subcellularLocation>
        <location>Chromosome</location>
    </subcellularLocation>
</comment>
<comment type="domain">
    <text>The [ST]-Q motif constitutes a recognition sequence for kinases from the PI3/PI4-kinase family.</text>
</comment>
<comment type="PTM">
    <text evidence="1">Phosphorylated to form H2AS128ph (gamma-H2A) in response to DNA double-strand breaks (DSBs) generated by exogenous genotoxic agents and by stalled replication forks. Phosphorylation is dependent on the DNA damage checkpoint kinases MEC1/ATR and TEL1/ATM, spreads on either side of a detected DSB site and may mark the surrounding chromatin for recruitment of proteins required for DNA damage signaling and repair. Gamma-H2A is removed from the DNA prior to the strand invasion-primer extension step of the repair process and subsequently dephosphorylated by PPH3, a component of the histone H2A phosphatase complex (HTP-C). Dephosphorylation is necessary for efficient recovery from the DNA damage checkpoint (By similarity).</text>
</comment>
<comment type="PTM">
    <text evidence="1">Acetylated by ESA1 to form H2AK4ac and H2AK7ac.</text>
</comment>
<comment type="miscellaneous">
    <text evidence="2">In contrast to vertebrates and insects, its C-terminus is not monoubiquitinated.</text>
</comment>
<comment type="similarity">
    <text evidence="2">Belongs to the histone H2A family.</text>
</comment>
<comment type="caution">
    <text evidence="2">To ensure consistency between histone entries, we follow the 'Brno' nomenclature for histone modifications, with positions referring to those used in the literature for the 'closest' model organism. Due to slight variations in histone sequences between organisms and to the presence of initiator methionine in UniProtKB/Swiss-Prot sequences, the actual positions of modified amino acids in the sequence generally differ. In this entry the following conventions are used: H2AK4ac = acetylated Lys-5; H2AK7ac = acetylated Lys-8; H2AS128ph = phosphorylated Ser-128.</text>
</comment>
<dbReference type="EMBL" id="CR380949">
    <property type="protein sequence ID" value="CAG58273.1"/>
    <property type="molecule type" value="Genomic_DNA"/>
</dbReference>
<dbReference type="RefSeq" id="XP_445367.1">
    <property type="nucleotide sequence ID" value="XM_445367.1"/>
</dbReference>
<dbReference type="SMR" id="Q6FWM7"/>
<dbReference type="FunCoup" id="Q6FWM7">
    <property type="interactions" value="1327"/>
</dbReference>
<dbReference type="STRING" id="284593.Q6FWM7"/>
<dbReference type="EnsemblFungi" id="CAGL0C04411g-T">
    <property type="protein sequence ID" value="CAGL0C04411g-T-p1"/>
    <property type="gene ID" value="CAGL0C04411g"/>
</dbReference>
<dbReference type="KEGG" id="cgr:2886776"/>
<dbReference type="CGD" id="CAL0127584">
    <property type="gene designation" value="CAGL0C04411g"/>
</dbReference>
<dbReference type="VEuPathDB" id="FungiDB:B1J91_C04411g"/>
<dbReference type="VEuPathDB" id="FungiDB:B1J91_K11440g"/>
<dbReference type="VEuPathDB" id="FungiDB:CAGL0C04411g"/>
<dbReference type="eggNOG" id="KOG1756">
    <property type="taxonomic scope" value="Eukaryota"/>
</dbReference>
<dbReference type="HOGENOM" id="CLU_062828_3_0_1"/>
<dbReference type="InParanoid" id="Q6FWM7"/>
<dbReference type="OMA" id="CALESQH"/>
<dbReference type="Proteomes" id="UP000002428">
    <property type="component" value="Chromosome C"/>
</dbReference>
<dbReference type="GO" id="GO:0005576">
    <property type="term" value="C:extracellular region"/>
    <property type="evidence" value="ECO:0000314"/>
    <property type="project" value="CGD"/>
</dbReference>
<dbReference type="GO" id="GO:0000786">
    <property type="term" value="C:nucleosome"/>
    <property type="evidence" value="ECO:0007669"/>
    <property type="project" value="UniProtKB-KW"/>
</dbReference>
<dbReference type="GO" id="GO:0005634">
    <property type="term" value="C:nucleus"/>
    <property type="evidence" value="ECO:0007669"/>
    <property type="project" value="UniProtKB-SubCell"/>
</dbReference>
<dbReference type="GO" id="GO:0003677">
    <property type="term" value="F:DNA binding"/>
    <property type="evidence" value="ECO:0007669"/>
    <property type="project" value="UniProtKB-KW"/>
</dbReference>
<dbReference type="GO" id="GO:0046982">
    <property type="term" value="F:protein heterodimerization activity"/>
    <property type="evidence" value="ECO:0007669"/>
    <property type="project" value="InterPro"/>
</dbReference>
<dbReference type="GO" id="GO:0030527">
    <property type="term" value="F:structural constituent of chromatin"/>
    <property type="evidence" value="ECO:0007669"/>
    <property type="project" value="InterPro"/>
</dbReference>
<dbReference type="GO" id="GO:0006281">
    <property type="term" value="P:DNA repair"/>
    <property type="evidence" value="ECO:0007669"/>
    <property type="project" value="UniProtKB-KW"/>
</dbReference>
<dbReference type="CDD" id="cd00074">
    <property type="entry name" value="HFD_H2A"/>
    <property type="match status" value="1"/>
</dbReference>
<dbReference type="FunFam" id="1.10.20.10:FF:000008">
    <property type="entry name" value="Histone H2A"/>
    <property type="match status" value="1"/>
</dbReference>
<dbReference type="Gene3D" id="1.10.20.10">
    <property type="entry name" value="Histone, subunit A"/>
    <property type="match status" value="1"/>
</dbReference>
<dbReference type="InterPro" id="IPR009072">
    <property type="entry name" value="Histone-fold"/>
</dbReference>
<dbReference type="InterPro" id="IPR002119">
    <property type="entry name" value="Histone_H2A"/>
</dbReference>
<dbReference type="InterPro" id="IPR007125">
    <property type="entry name" value="Histone_H2A/H2B/H3"/>
</dbReference>
<dbReference type="InterPro" id="IPR032454">
    <property type="entry name" value="Histone_H2A_C"/>
</dbReference>
<dbReference type="InterPro" id="IPR032458">
    <property type="entry name" value="Histone_H2A_CS"/>
</dbReference>
<dbReference type="PANTHER" id="PTHR23430">
    <property type="entry name" value="HISTONE H2A"/>
    <property type="match status" value="1"/>
</dbReference>
<dbReference type="Pfam" id="PF00125">
    <property type="entry name" value="Histone"/>
    <property type="match status" value="1"/>
</dbReference>
<dbReference type="Pfam" id="PF16211">
    <property type="entry name" value="Histone_H2A_C"/>
    <property type="match status" value="1"/>
</dbReference>
<dbReference type="PRINTS" id="PR00620">
    <property type="entry name" value="HISTONEH2A"/>
</dbReference>
<dbReference type="SMART" id="SM00414">
    <property type="entry name" value="H2A"/>
    <property type="match status" value="1"/>
</dbReference>
<dbReference type="SUPFAM" id="SSF47113">
    <property type="entry name" value="Histone-fold"/>
    <property type="match status" value="1"/>
</dbReference>
<dbReference type="PROSITE" id="PS00046">
    <property type="entry name" value="HISTONE_H2A"/>
    <property type="match status" value="1"/>
</dbReference>
<accession>Q6FWM7</accession>
<organism>
    <name type="scientific">Candida glabrata (strain ATCC 2001 / BCRC 20586 / JCM 3761 / NBRC 0622 / NRRL Y-65 / CBS 138)</name>
    <name type="common">Yeast</name>
    <name type="synonym">Nakaseomyces glabratus</name>
    <dbReference type="NCBI Taxonomy" id="284593"/>
    <lineage>
        <taxon>Eukaryota</taxon>
        <taxon>Fungi</taxon>
        <taxon>Dikarya</taxon>
        <taxon>Ascomycota</taxon>
        <taxon>Saccharomycotina</taxon>
        <taxon>Saccharomycetes</taxon>
        <taxon>Saccharomycetales</taxon>
        <taxon>Saccharomycetaceae</taxon>
        <taxon>Nakaseomyces</taxon>
    </lineage>
</organism>
<proteinExistence type="inferred from homology"/>
<gene>
    <name type="primary">HTA1</name>
    <name type="ordered locus">CAGL0C04411g</name>
</gene>
<reference key="1">
    <citation type="journal article" date="2004" name="Nature">
        <title>Genome evolution in yeasts.</title>
        <authorList>
            <person name="Dujon B."/>
            <person name="Sherman D."/>
            <person name="Fischer G."/>
            <person name="Durrens P."/>
            <person name="Casaregola S."/>
            <person name="Lafontaine I."/>
            <person name="de Montigny J."/>
            <person name="Marck C."/>
            <person name="Neuveglise C."/>
            <person name="Talla E."/>
            <person name="Goffard N."/>
            <person name="Frangeul L."/>
            <person name="Aigle M."/>
            <person name="Anthouard V."/>
            <person name="Babour A."/>
            <person name="Barbe V."/>
            <person name="Barnay S."/>
            <person name="Blanchin S."/>
            <person name="Beckerich J.-M."/>
            <person name="Beyne E."/>
            <person name="Bleykasten C."/>
            <person name="Boisrame A."/>
            <person name="Boyer J."/>
            <person name="Cattolico L."/>
            <person name="Confanioleri F."/>
            <person name="de Daruvar A."/>
            <person name="Despons L."/>
            <person name="Fabre E."/>
            <person name="Fairhead C."/>
            <person name="Ferry-Dumazet H."/>
            <person name="Groppi A."/>
            <person name="Hantraye F."/>
            <person name="Hennequin C."/>
            <person name="Jauniaux N."/>
            <person name="Joyet P."/>
            <person name="Kachouri R."/>
            <person name="Kerrest A."/>
            <person name="Koszul R."/>
            <person name="Lemaire M."/>
            <person name="Lesur I."/>
            <person name="Ma L."/>
            <person name="Muller H."/>
            <person name="Nicaud J.-M."/>
            <person name="Nikolski M."/>
            <person name="Oztas S."/>
            <person name="Ozier-Kalogeropoulos O."/>
            <person name="Pellenz S."/>
            <person name="Potier S."/>
            <person name="Richard G.-F."/>
            <person name="Straub M.-L."/>
            <person name="Suleau A."/>
            <person name="Swennen D."/>
            <person name="Tekaia F."/>
            <person name="Wesolowski-Louvel M."/>
            <person name="Westhof E."/>
            <person name="Wirth B."/>
            <person name="Zeniou-Meyer M."/>
            <person name="Zivanovic Y."/>
            <person name="Bolotin-Fukuhara M."/>
            <person name="Thierry A."/>
            <person name="Bouchier C."/>
            <person name="Caudron B."/>
            <person name="Scarpelli C."/>
            <person name="Gaillardin C."/>
            <person name="Weissenbach J."/>
            <person name="Wincker P."/>
            <person name="Souciet J.-L."/>
        </authorList>
    </citation>
    <scope>NUCLEOTIDE SEQUENCE [LARGE SCALE GENOMIC DNA]</scope>
    <source>
        <strain>ATCC 2001 / BCRC 20586 / JCM 3761 / NBRC 0622 / NRRL Y-65 / CBS 138</strain>
    </source>
</reference>